<gene>
    <name evidence="1" type="primary">rlmH</name>
    <name type="ordered locus">MSC_0424</name>
</gene>
<dbReference type="EC" id="2.1.1.177" evidence="1"/>
<dbReference type="EMBL" id="BX293980">
    <property type="protein sequence ID" value="CAE77052.1"/>
    <property type="molecule type" value="Genomic_DNA"/>
</dbReference>
<dbReference type="RefSeq" id="NP_975410.1">
    <property type="nucleotide sequence ID" value="NC_005364.2"/>
</dbReference>
<dbReference type="RefSeq" id="WP_011166608.1">
    <property type="nucleotide sequence ID" value="NC_005364.2"/>
</dbReference>
<dbReference type="SMR" id="Q6MTI4"/>
<dbReference type="STRING" id="272632.MSC_0424"/>
<dbReference type="KEGG" id="mmy:MSC_0424"/>
<dbReference type="PATRIC" id="fig|272632.4.peg.462"/>
<dbReference type="eggNOG" id="COG1576">
    <property type="taxonomic scope" value="Bacteria"/>
</dbReference>
<dbReference type="HOGENOM" id="CLU_100552_0_0_14"/>
<dbReference type="Proteomes" id="UP000001016">
    <property type="component" value="Chromosome"/>
</dbReference>
<dbReference type="GO" id="GO:0005737">
    <property type="term" value="C:cytoplasm"/>
    <property type="evidence" value="ECO:0007669"/>
    <property type="project" value="UniProtKB-SubCell"/>
</dbReference>
<dbReference type="GO" id="GO:0070038">
    <property type="term" value="F:rRNA (pseudouridine-N3-)-methyltransferase activity"/>
    <property type="evidence" value="ECO:0007669"/>
    <property type="project" value="UniProtKB-UniRule"/>
</dbReference>
<dbReference type="CDD" id="cd18081">
    <property type="entry name" value="RlmH-like"/>
    <property type="match status" value="1"/>
</dbReference>
<dbReference type="Gene3D" id="3.40.1280.10">
    <property type="match status" value="1"/>
</dbReference>
<dbReference type="HAMAP" id="MF_00658">
    <property type="entry name" value="23SrRNA_methyltr_H"/>
    <property type="match status" value="1"/>
</dbReference>
<dbReference type="InterPro" id="IPR029028">
    <property type="entry name" value="Alpha/beta_knot_MTases"/>
</dbReference>
<dbReference type="InterPro" id="IPR003742">
    <property type="entry name" value="RlmH-like"/>
</dbReference>
<dbReference type="InterPro" id="IPR029026">
    <property type="entry name" value="tRNA_m1G_MTases_N"/>
</dbReference>
<dbReference type="PANTHER" id="PTHR33603">
    <property type="entry name" value="METHYLTRANSFERASE"/>
    <property type="match status" value="1"/>
</dbReference>
<dbReference type="PANTHER" id="PTHR33603:SF1">
    <property type="entry name" value="RIBOSOMAL RNA LARGE SUBUNIT METHYLTRANSFERASE H"/>
    <property type="match status" value="1"/>
</dbReference>
<dbReference type="Pfam" id="PF02590">
    <property type="entry name" value="SPOUT_MTase"/>
    <property type="match status" value="1"/>
</dbReference>
<dbReference type="PIRSF" id="PIRSF004505">
    <property type="entry name" value="MT_bac"/>
    <property type="match status" value="1"/>
</dbReference>
<dbReference type="SUPFAM" id="SSF75217">
    <property type="entry name" value="alpha/beta knot"/>
    <property type="match status" value="1"/>
</dbReference>
<comment type="function">
    <text evidence="1">Specifically methylates the pseudouridine at position 1915 (m3Psi1915) in 23S rRNA.</text>
</comment>
<comment type="catalytic activity">
    <reaction evidence="1">
        <text>pseudouridine(1915) in 23S rRNA + S-adenosyl-L-methionine = N(3)-methylpseudouridine(1915) in 23S rRNA + S-adenosyl-L-homocysteine + H(+)</text>
        <dbReference type="Rhea" id="RHEA:42752"/>
        <dbReference type="Rhea" id="RHEA-COMP:10221"/>
        <dbReference type="Rhea" id="RHEA-COMP:10222"/>
        <dbReference type="ChEBI" id="CHEBI:15378"/>
        <dbReference type="ChEBI" id="CHEBI:57856"/>
        <dbReference type="ChEBI" id="CHEBI:59789"/>
        <dbReference type="ChEBI" id="CHEBI:65314"/>
        <dbReference type="ChEBI" id="CHEBI:74486"/>
        <dbReference type="EC" id="2.1.1.177"/>
    </reaction>
</comment>
<comment type="subunit">
    <text evidence="1">Homodimer.</text>
</comment>
<comment type="subcellular location">
    <subcellularLocation>
        <location evidence="1">Cytoplasm</location>
    </subcellularLocation>
</comment>
<comment type="similarity">
    <text evidence="1">Belongs to the RNA methyltransferase RlmH family.</text>
</comment>
<organism>
    <name type="scientific">Mycoplasma mycoides subsp. mycoides SC (strain CCUG 32753 / NCTC 10114 / PG1)</name>
    <dbReference type="NCBI Taxonomy" id="272632"/>
    <lineage>
        <taxon>Bacteria</taxon>
        <taxon>Bacillati</taxon>
        <taxon>Mycoplasmatota</taxon>
        <taxon>Mollicutes</taxon>
        <taxon>Mycoplasmataceae</taxon>
        <taxon>Mycoplasma</taxon>
    </lineage>
</organism>
<evidence type="ECO:0000255" key="1">
    <source>
        <dbReference type="HAMAP-Rule" id="MF_00658"/>
    </source>
</evidence>
<reference key="1">
    <citation type="journal article" date="2004" name="Genome Res.">
        <title>The genome sequence of Mycoplasma mycoides subsp. mycoides SC type strain PG1T, the causative agent of contagious bovine pleuropneumonia (CBPP).</title>
        <authorList>
            <person name="Westberg J."/>
            <person name="Persson A."/>
            <person name="Holmberg A."/>
            <person name="Goesmann A."/>
            <person name="Lundeberg J."/>
            <person name="Johansson K.-E."/>
            <person name="Pettersson B."/>
            <person name="Uhlen M."/>
        </authorList>
    </citation>
    <scope>NUCLEOTIDE SEQUENCE [LARGE SCALE GENOMIC DNA]</scope>
    <source>
        <strain>CCUG 32753 / NCTC 10114 / PG1</strain>
    </source>
</reference>
<feature type="chain" id="PRO_0000198146" description="Ribosomal RNA large subunit methyltransferase H">
    <location>
        <begin position="1"/>
        <end position="155"/>
    </location>
</feature>
<feature type="binding site" evidence="1">
    <location>
        <position position="72"/>
    </location>
    <ligand>
        <name>S-adenosyl-L-methionine</name>
        <dbReference type="ChEBI" id="CHEBI:59789"/>
    </ligand>
</feature>
<feature type="binding site" evidence="1">
    <location>
        <position position="104"/>
    </location>
    <ligand>
        <name>S-adenosyl-L-methionine</name>
        <dbReference type="ChEBI" id="CHEBI:59789"/>
    </ligand>
</feature>
<feature type="binding site" evidence="1">
    <location>
        <begin position="123"/>
        <end position="128"/>
    </location>
    <ligand>
        <name>S-adenosyl-L-methionine</name>
        <dbReference type="ChEBI" id="CHEBI:59789"/>
    </ligand>
</feature>
<proteinExistence type="inferred from homology"/>
<accession>Q6MTI4</accession>
<protein>
    <recommendedName>
        <fullName evidence="1">Ribosomal RNA large subunit methyltransferase H</fullName>
        <ecNumber evidence="1">2.1.1.177</ecNumber>
    </recommendedName>
    <alternativeName>
        <fullName evidence="1">23S rRNA (pseudouridine1915-N3)-methyltransferase</fullName>
    </alternativeName>
    <alternativeName>
        <fullName evidence="1">23S rRNA m3Psi1915 methyltransferase</fullName>
    </alternativeName>
    <alternativeName>
        <fullName evidence="1">rRNA (pseudouridine-N3-)-methyltransferase RlmH</fullName>
    </alternativeName>
</protein>
<name>RLMH_MYCMS</name>
<sequence>MKIKILCFGKLDKKFYIDAFNDYFKRLKKYVDLEIIELKEEVNGELNKIKDENSNLLLKKLQNYKDFEKVVLDVNSRLISTENLVEIIKTNLNYKSAKILFIIGPSDGYSKSFLNSFTNKFSLAKITLPHQLCRIVLIEQIYRVFKIINNEKYHK</sequence>
<keyword id="KW-0963">Cytoplasm</keyword>
<keyword id="KW-0489">Methyltransferase</keyword>
<keyword id="KW-1185">Reference proteome</keyword>
<keyword id="KW-0698">rRNA processing</keyword>
<keyword id="KW-0949">S-adenosyl-L-methionine</keyword>
<keyword id="KW-0808">Transferase</keyword>